<dbReference type="EMBL" id="X86563">
    <property type="protein sequence ID" value="CAA60266.1"/>
    <property type="status" value="ALT_SEQ"/>
    <property type="molecule type" value="Genomic_DNA"/>
</dbReference>
<dbReference type="PIR" id="S58532">
    <property type="entry name" value="S58532"/>
</dbReference>
<dbReference type="RefSeq" id="NP_043005.2">
    <property type="nucleotide sequence ID" value="NC_001666.2"/>
</dbReference>
<dbReference type="FunCoup" id="P48190">
    <property type="interactions" value="1"/>
</dbReference>
<dbReference type="STRING" id="4577.P48190"/>
<dbReference type="PaxDb" id="4577-GRMZM5G836994_P01"/>
<dbReference type="GeneID" id="845178"/>
<dbReference type="KEGG" id="zma:845178"/>
<dbReference type="MaizeGDB" id="118213"/>
<dbReference type="eggNOG" id="ENOG502QWRZ">
    <property type="taxonomic scope" value="Eukaryota"/>
</dbReference>
<dbReference type="InParanoid" id="P48190"/>
<dbReference type="OrthoDB" id="597045at2759"/>
<dbReference type="Proteomes" id="UP000007305">
    <property type="component" value="Chloroplast"/>
</dbReference>
<dbReference type="GO" id="GO:0009507">
    <property type="term" value="C:chloroplast"/>
    <property type="evidence" value="ECO:0007669"/>
    <property type="project" value="UniProtKB-SubCell"/>
</dbReference>
<dbReference type="GO" id="GO:0003723">
    <property type="term" value="F:RNA binding"/>
    <property type="evidence" value="ECO:0007669"/>
    <property type="project" value="UniProtKB-KW"/>
</dbReference>
<dbReference type="GO" id="GO:0006397">
    <property type="term" value="P:mRNA processing"/>
    <property type="evidence" value="ECO:0007669"/>
    <property type="project" value="UniProtKB-KW"/>
</dbReference>
<dbReference type="GO" id="GO:0008380">
    <property type="term" value="P:RNA splicing"/>
    <property type="evidence" value="ECO:0007669"/>
    <property type="project" value="UniProtKB-UniRule"/>
</dbReference>
<dbReference type="GO" id="GO:0008033">
    <property type="term" value="P:tRNA processing"/>
    <property type="evidence" value="ECO:0007669"/>
    <property type="project" value="UniProtKB-KW"/>
</dbReference>
<dbReference type="HAMAP" id="MF_01390">
    <property type="entry name" value="MatK"/>
    <property type="match status" value="1"/>
</dbReference>
<dbReference type="InterPro" id="IPR024937">
    <property type="entry name" value="Domain_X"/>
</dbReference>
<dbReference type="InterPro" id="IPR002866">
    <property type="entry name" value="Maturase_MatK"/>
</dbReference>
<dbReference type="InterPro" id="IPR024942">
    <property type="entry name" value="Maturase_MatK_N"/>
</dbReference>
<dbReference type="PANTHER" id="PTHR34811">
    <property type="entry name" value="MATURASE K"/>
    <property type="match status" value="1"/>
</dbReference>
<dbReference type="PANTHER" id="PTHR34811:SF1">
    <property type="entry name" value="MATURASE K"/>
    <property type="match status" value="1"/>
</dbReference>
<dbReference type="Pfam" id="PF01348">
    <property type="entry name" value="Intron_maturas2"/>
    <property type="match status" value="1"/>
</dbReference>
<dbReference type="Pfam" id="PF01824">
    <property type="entry name" value="MatK_N"/>
    <property type="match status" value="1"/>
</dbReference>
<evidence type="ECO:0000250" key="1"/>
<evidence type="ECO:0000255" key="2">
    <source>
        <dbReference type="HAMAP-Rule" id="MF_01390"/>
    </source>
</evidence>
<evidence type="ECO:0000305" key="3"/>
<comment type="function">
    <text evidence="2">Usually encoded in the trnK tRNA gene intron. Probably assists in splicing its own and other chloroplast group II introns.</text>
</comment>
<comment type="subcellular location">
    <subcellularLocation>
        <location>Plastid</location>
        <location>Chloroplast</location>
    </subcellularLocation>
</comment>
<comment type="RNA editing">
    <location>
        <position position="420" evidence="1"/>
    </location>
</comment>
<comment type="similarity">
    <text evidence="2">Belongs to the intron maturase 2 family. MatK subfamily.</text>
</comment>
<comment type="sequence caution" evidence="3">
    <conflict type="erroneous initiation">
        <sequence resource="EMBL-CDS" id="CAA60266"/>
    </conflict>
    <text>Extended N-terminus.</text>
</comment>
<keyword id="KW-0150">Chloroplast</keyword>
<keyword id="KW-0507">mRNA processing</keyword>
<keyword id="KW-0934">Plastid</keyword>
<keyword id="KW-1185">Reference proteome</keyword>
<keyword id="KW-0691">RNA editing</keyword>
<keyword id="KW-0694">RNA-binding</keyword>
<keyword id="KW-0819">tRNA processing</keyword>
<accession>P48190</accession>
<proteinExistence type="inferred from homology"/>
<geneLocation type="chloroplast"/>
<sequence>MEKFEGYSEKQKSRQHYFVYPLLFQEYIYAFAHDYGLNGSEPVEIFGCNNKKFSSLLVNRLIIRMYQQNFLINSVNYPNQDRLLDHRNYFYSEFYSQILSEGFAIVVEIPLSLGQLSCPEEKEIPNFQNLQSIHSIFPFLEDKFLHLHYLSHIKIPYPIHLEILVQLLEYRSQDVPSLHLLRFFLYYYSNWNSFITSMKSIFLLKKENKRLFRFLYNSYVSEYEFFLLFLHKQSSCLRLTSSGTFLERIIFSGKMEHFGVMYPGFFRKTIWFFMDPLMHYVRYQGKAILASKGTLLLKKKWKSYLVNFSQYFFSFWTQPQRIRLNQLTNSCFDFLGYLSSVPINTLLVRNQMLENSFLIDTRMKKFDTTVLATPLVGSLSKAQFCTGSGHPISKPVWTDLSDWDILDRFGRICRNIFHYYSGSSKKQTLYRLKYILRLSCARTLARKHKSTVRTFMQRLGSVFLEEFFTEEEQVFSLMFTKTIHFSFHGSHSECIWYLDIIRINDLVNPLTLN</sequence>
<protein>
    <recommendedName>
        <fullName evidence="2">Maturase K</fullName>
    </recommendedName>
    <alternativeName>
        <fullName evidence="2">Intron maturase</fullName>
    </alternativeName>
</protein>
<feature type="chain" id="PRO_0000143796" description="Maturase K">
    <location>
        <begin position="1"/>
        <end position="513"/>
    </location>
</feature>
<gene>
    <name evidence="2" type="primary">matK</name>
    <name type="synonym">ycf14</name>
</gene>
<organism>
    <name type="scientific">Zea mays</name>
    <name type="common">Maize</name>
    <dbReference type="NCBI Taxonomy" id="4577"/>
    <lineage>
        <taxon>Eukaryota</taxon>
        <taxon>Viridiplantae</taxon>
        <taxon>Streptophyta</taxon>
        <taxon>Embryophyta</taxon>
        <taxon>Tracheophyta</taxon>
        <taxon>Spermatophyta</taxon>
        <taxon>Magnoliopsida</taxon>
        <taxon>Liliopsida</taxon>
        <taxon>Poales</taxon>
        <taxon>Poaceae</taxon>
        <taxon>PACMAD clade</taxon>
        <taxon>Panicoideae</taxon>
        <taxon>Andropogonodae</taxon>
        <taxon>Andropogoneae</taxon>
        <taxon>Tripsacinae</taxon>
        <taxon>Zea</taxon>
    </lineage>
</organism>
<name>MATK_MAIZE</name>
<reference key="1">
    <citation type="journal article" date="1995" name="J. Mol. Biol.">
        <title>Complete sequence of the maize chloroplast genome: gene content, hotspots of divergence and fine tuning of genetic information by transcript editing.</title>
        <authorList>
            <person name="Maier R.M."/>
            <person name="Neckermann K."/>
            <person name="Igloi G.L."/>
            <person name="Koessel H."/>
        </authorList>
    </citation>
    <scope>NUCLEOTIDE SEQUENCE [LARGE SCALE GENOMIC DNA]</scope>
    <source>
        <strain>cv. B73</strain>
    </source>
</reference>